<name>RL20_STRPQ</name>
<reference key="1">
    <citation type="journal article" date="2003" name="Genome Res.">
        <title>Genome sequence of an M3 strain of Streptococcus pyogenes reveals a large-scale genomic rearrangement in invasive strains and new insights into phage evolution.</title>
        <authorList>
            <person name="Nakagawa I."/>
            <person name="Kurokawa K."/>
            <person name="Yamashita A."/>
            <person name="Nakata M."/>
            <person name="Tomiyasu Y."/>
            <person name="Okahashi N."/>
            <person name="Kawabata S."/>
            <person name="Yamazaki K."/>
            <person name="Shiba T."/>
            <person name="Yasunaga T."/>
            <person name="Hayashi H."/>
            <person name="Hattori M."/>
            <person name="Hamada S."/>
        </authorList>
    </citation>
    <scope>NUCLEOTIDE SEQUENCE [LARGE SCALE GENOMIC DNA]</scope>
    <source>
        <strain>SSI-1</strain>
    </source>
</reference>
<proteinExistence type="inferred from homology"/>
<sequence length="119" mass="13622">MARVKGGVVSRKRRKRILKLAKGYYGAKHILFRTAKEQVMNSYYYAYRDRRQKKRDFRKLWITRINAAARMNGLSYSQLMHGLKLAEIEVNRKMLADLAVADAAAFTALADAAKAKLGK</sequence>
<accession>P0DE19</accession>
<accession>P66115</accession>
<accession>Q9A0E8</accession>
<protein>
    <recommendedName>
        <fullName evidence="1">Large ribosomal subunit protein bL20</fullName>
    </recommendedName>
    <alternativeName>
        <fullName evidence="2">50S ribosomal protein L20</fullName>
    </alternativeName>
</protein>
<gene>
    <name evidence="1" type="primary">rplT</name>
    <name type="synonym">rl20</name>
    <name type="ordered locus">SPs1314</name>
</gene>
<keyword id="KW-0687">Ribonucleoprotein</keyword>
<keyword id="KW-0689">Ribosomal protein</keyword>
<keyword id="KW-0694">RNA-binding</keyword>
<keyword id="KW-0699">rRNA-binding</keyword>
<feature type="chain" id="PRO_0000411499" description="Large ribosomal subunit protein bL20">
    <location>
        <begin position="1"/>
        <end position="119"/>
    </location>
</feature>
<comment type="function">
    <text evidence="1">Binds directly to 23S ribosomal RNA and is necessary for the in vitro assembly process of the 50S ribosomal subunit. It is not involved in the protein synthesizing functions of that subunit.</text>
</comment>
<comment type="similarity">
    <text evidence="1">Belongs to the bacterial ribosomal protein bL20 family.</text>
</comment>
<evidence type="ECO:0000255" key="1">
    <source>
        <dbReference type="HAMAP-Rule" id="MF_00382"/>
    </source>
</evidence>
<evidence type="ECO:0000305" key="2"/>
<organism>
    <name type="scientific">Streptococcus pyogenes serotype M3 (strain SSI-1)</name>
    <dbReference type="NCBI Taxonomy" id="193567"/>
    <lineage>
        <taxon>Bacteria</taxon>
        <taxon>Bacillati</taxon>
        <taxon>Bacillota</taxon>
        <taxon>Bacilli</taxon>
        <taxon>Lactobacillales</taxon>
        <taxon>Streptococcaceae</taxon>
        <taxon>Streptococcus</taxon>
    </lineage>
</organism>
<dbReference type="EMBL" id="BA000034">
    <property type="protein sequence ID" value="BAC64409.1"/>
    <property type="molecule type" value="Genomic_DNA"/>
</dbReference>
<dbReference type="RefSeq" id="WP_002985149.1">
    <property type="nucleotide sequence ID" value="NC_004606.1"/>
</dbReference>
<dbReference type="SMR" id="P0DE19"/>
<dbReference type="GeneID" id="69901075"/>
<dbReference type="KEGG" id="sps:SPs1314"/>
<dbReference type="HOGENOM" id="CLU_123265_0_1_9"/>
<dbReference type="GO" id="GO:1990904">
    <property type="term" value="C:ribonucleoprotein complex"/>
    <property type="evidence" value="ECO:0007669"/>
    <property type="project" value="UniProtKB-KW"/>
</dbReference>
<dbReference type="GO" id="GO:0005840">
    <property type="term" value="C:ribosome"/>
    <property type="evidence" value="ECO:0007669"/>
    <property type="project" value="UniProtKB-KW"/>
</dbReference>
<dbReference type="GO" id="GO:0019843">
    <property type="term" value="F:rRNA binding"/>
    <property type="evidence" value="ECO:0007669"/>
    <property type="project" value="UniProtKB-UniRule"/>
</dbReference>
<dbReference type="GO" id="GO:0003735">
    <property type="term" value="F:structural constituent of ribosome"/>
    <property type="evidence" value="ECO:0007669"/>
    <property type="project" value="InterPro"/>
</dbReference>
<dbReference type="GO" id="GO:0000027">
    <property type="term" value="P:ribosomal large subunit assembly"/>
    <property type="evidence" value="ECO:0007669"/>
    <property type="project" value="UniProtKB-UniRule"/>
</dbReference>
<dbReference type="GO" id="GO:0006412">
    <property type="term" value="P:translation"/>
    <property type="evidence" value="ECO:0007669"/>
    <property type="project" value="InterPro"/>
</dbReference>
<dbReference type="CDD" id="cd07026">
    <property type="entry name" value="Ribosomal_L20"/>
    <property type="match status" value="1"/>
</dbReference>
<dbReference type="FunFam" id="1.10.1900.20:FF:000001">
    <property type="entry name" value="50S ribosomal protein L20"/>
    <property type="match status" value="1"/>
</dbReference>
<dbReference type="Gene3D" id="6.10.160.10">
    <property type="match status" value="1"/>
</dbReference>
<dbReference type="Gene3D" id="1.10.1900.20">
    <property type="entry name" value="Ribosomal protein L20"/>
    <property type="match status" value="1"/>
</dbReference>
<dbReference type="HAMAP" id="MF_00382">
    <property type="entry name" value="Ribosomal_bL20"/>
    <property type="match status" value="1"/>
</dbReference>
<dbReference type="InterPro" id="IPR005813">
    <property type="entry name" value="Ribosomal_bL20"/>
</dbReference>
<dbReference type="InterPro" id="IPR049946">
    <property type="entry name" value="RIBOSOMAL_L20_CS"/>
</dbReference>
<dbReference type="InterPro" id="IPR035566">
    <property type="entry name" value="Ribosomal_protein_bL20_C"/>
</dbReference>
<dbReference type="NCBIfam" id="TIGR01032">
    <property type="entry name" value="rplT_bact"/>
    <property type="match status" value="1"/>
</dbReference>
<dbReference type="PANTHER" id="PTHR10986">
    <property type="entry name" value="39S RIBOSOMAL PROTEIN L20"/>
    <property type="match status" value="1"/>
</dbReference>
<dbReference type="Pfam" id="PF00453">
    <property type="entry name" value="Ribosomal_L20"/>
    <property type="match status" value="1"/>
</dbReference>
<dbReference type="PRINTS" id="PR00062">
    <property type="entry name" value="RIBOSOMALL20"/>
</dbReference>
<dbReference type="SUPFAM" id="SSF74731">
    <property type="entry name" value="Ribosomal protein L20"/>
    <property type="match status" value="1"/>
</dbReference>
<dbReference type="PROSITE" id="PS00937">
    <property type="entry name" value="RIBOSOMAL_L20"/>
    <property type="match status" value="1"/>
</dbReference>